<dbReference type="EMBL" id="CP000253">
    <property type="protein sequence ID" value="ABD29977.1"/>
    <property type="molecule type" value="Genomic_DNA"/>
</dbReference>
<dbReference type="RefSeq" id="YP_499405.1">
    <property type="nucleotide sequence ID" value="NC_007795.1"/>
</dbReference>
<dbReference type="SMR" id="Q2FZY3"/>
<dbReference type="STRING" id="93061.SAOUHSC_00851"/>
<dbReference type="PaxDb" id="1280-SAXN108_0913"/>
<dbReference type="GeneID" id="3918982"/>
<dbReference type="KEGG" id="sao:SAOUHSC_00851"/>
<dbReference type="PATRIC" id="fig|93061.5.peg.774"/>
<dbReference type="eggNOG" id="COG0719">
    <property type="taxonomic scope" value="Bacteria"/>
</dbReference>
<dbReference type="HOGENOM" id="CLU_026231_0_1_9"/>
<dbReference type="OrthoDB" id="9803529at2"/>
<dbReference type="PRO" id="PR:Q2FZY3"/>
<dbReference type="Proteomes" id="UP000008816">
    <property type="component" value="Chromosome"/>
</dbReference>
<dbReference type="GO" id="GO:0016226">
    <property type="term" value="P:iron-sulfur cluster assembly"/>
    <property type="evidence" value="ECO:0007669"/>
    <property type="project" value="InterPro"/>
</dbReference>
<dbReference type="InterPro" id="IPR055346">
    <property type="entry name" value="Fe-S_cluster_assembly_SufBD"/>
</dbReference>
<dbReference type="InterPro" id="IPR010231">
    <property type="entry name" value="SUF_FeS_clus_asmbl_SufB"/>
</dbReference>
<dbReference type="InterPro" id="IPR000825">
    <property type="entry name" value="SUF_FeS_clus_asmbl_SufBD_core"/>
</dbReference>
<dbReference type="InterPro" id="IPR037284">
    <property type="entry name" value="SUF_FeS_clus_asmbl_SufBD_sf"/>
</dbReference>
<dbReference type="InterPro" id="IPR045595">
    <property type="entry name" value="SufBD_N"/>
</dbReference>
<dbReference type="NCBIfam" id="TIGR01980">
    <property type="entry name" value="sufB"/>
    <property type="match status" value="1"/>
</dbReference>
<dbReference type="PANTHER" id="PTHR30508">
    <property type="entry name" value="FES CLUSTER ASSEMBLY PROTEIN SUF"/>
    <property type="match status" value="1"/>
</dbReference>
<dbReference type="PANTHER" id="PTHR30508:SF1">
    <property type="entry name" value="UPF0051 PROTEIN ABCI8, CHLOROPLASTIC-RELATED"/>
    <property type="match status" value="1"/>
</dbReference>
<dbReference type="Pfam" id="PF01458">
    <property type="entry name" value="SUFBD_core"/>
    <property type="match status" value="1"/>
</dbReference>
<dbReference type="Pfam" id="PF19295">
    <property type="entry name" value="SufBD_N"/>
    <property type="match status" value="1"/>
</dbReference>
<dbReference type="SUPFAM" id="SSF101960">
    <property type="entry name" value="Stabilizer of iron transporter SufD"/>
    <property type="match status" value="1"/>
</dbReference>
<accession>Q2FZY3</accession>
<comment type="similarity">
    <text evidence="1">Belongs to the iron-sulfur cluster assembly SufBD family.</text>
</comment>
<feature type="chain" id="PRO_0000298957" description="Iron-sulfur cluster assembly SufBD family protein SAOUHSC_00851">
    <location>
        <begin position="1"/>
        <end position="465"/>
    </location>
</feature>
<evidence type="ECO:0000305" key="1"/>
<proteinExistence type="inferred from homology"/>
<organism>
    <name type="scientific">Staphylococcus aureus (strain NCTC 8325 / PS 47)</name>
    <dbReference type="NCBI Taxonomy" id="93061"/>
    <lineage>
        <taxon>Bacteria</taxon>
        <taxon>Bacillati</taxon>
        <taxon>Bacillota</taxon>
        <taxon>Bacilli</taxon>
        <taxon>Bacillales</taxon>
        <taxon>Staphylococcaceae</taxon>
        <taxon>Staphylococcus</taxon>
    </lineage>
</organism>
<protein>
    <recommendedName>
        <fullName>Iron-sulfur cluster assembly SufBD family protein SAOUHSC_00851</fullName>
    </recommendedName>
</protein>
<name>Y851_STAA8</name>
<sequence length="465" mass="52531">MAKKAPDVGDYKYGFHDDDVSIFRSERGLTENIVREISNMKNEPEWMLDFRLKSLKLFYKMPMPQWGGDLSELNFDDITYYVKPSEQAERSWDEVPEEIKRTFDKLGIPEAEQKYLAGVSAQYESEVVYHNMEKELEEKGIIFKDTDSALQENEELFKKYFASVVPAADNKFAALNSAVWSGGSFIYVPKNIKLDTPLQAYFRINSENMGQFERTLIIADEGASVHYVEGCTAPVYTTSSLHSAVVEIIVHKDAHVRYTTIQNWANNVYNLVTKRTFVYENGNMEWVDGNLGSKLTMKYPNCVLLGEGAKGSTLSIAFAGKGQVQDAGAKMIHKAPNTSSTIVSKSISKNGGKVIYRGIVHFGRKAKGARSNIECDTLILDNESTSDTIPYNEVFNDQISLEHEAKVSKVSEEQLFYLMSRGISEEEATEMIVMGFIEPFTKELPMEYAVEMNRLIKFEMEGSIG</sequence>
<keyword id="KW-1185">Reference proteome</keyword>
<gene>
    <name type="ordered locus">SAOUHSC_00851</name>
</gene>
<reference key="1">
    <citation type="book" date="2006" name="Gram positive pathogens, 2nd edition">
        <title>The Staphylococcus aureus NCTC 8325 genome.</title>
        <editorList>
            <person name="Fischetti V."/>
            <person name="Novick R."/>
            <person name="Ferretti J."/>
            <person name="Portnoy D."/>
            <person name="Rood J."/>
        </editorList>
        <authorList>
            <person name="Gillaspy A.F."/>
            <person name="Worrell V."/>
            <person name="Orvis J."/>
            <person name="Roe B.A."/>
            <person name="Dyer D.W."/>
            <person name="Iandolo J.J."/>
        </authorList>
    </citation>
    <scope>NUCLEOTIDE SEQUENCE [LARGE SCALE GENOMIC DNA]</scope>
    <source>
        <strain>NCTC 8325 / PS 47</strain>
    </source>
</reference>